<accession>P0DH13</accession>
<accession>Q79WT0</accession>
<accession>Q8K7Z5</accession>
<name>Y545_STRPQ</name>
<gene>
    <name type="ordered locus">SPs1309</name>
</gene>
<protein>
    <recommendedName>
        <fullName evidence="1">UPF0342 protein SPs1309</fullName>
    </recommendedName>
</protein>
<feature type="chain" id="PRO_0000411646" description="UPF0342 protein SPs1309">
    <location>
        <begin position="1"/>
        <end position="113"/>
    </location>
</feature>
<dbReference type="EMBL" id="BA000034">
    <property type="protein sequence ID" value="BAC64404.1"/>
    <property type="molecule type" value="Genomic_DNA"/>
</dbReference>
<dbReference type="RefSeq" id="WP_011054350.1">
    <property type="nucleotide sequence ID" value="NC_004606.1"/>
</dbReference>
<dbReference type="SMR" id="P0DH13"/>
<dbReference type="KEGG" id="sps:SPs1309"/>
<dbReference type="HOGENOM" id="CLU_140243_2_0_9"/>
<dbReference type="Gene3D" id="1.20.1500.10">
    <property type="entry name" value="YheA/YmcA-like"/>
    <property type="match status" value="1"/>
</dbReference>
<dbReference type="HAMAP" id="MF_01526">
    <property type="entry name" value="UPF0342"/>
    <property type="match status" value="1"/>
</dbReference>
<dbReference type="InterPro" id="IPR010368">
    <property type="entry name" value="Com_YlbF"/>
</dbReference>
<dbReference type="InterPro" id="IPR023378">
    <property type="entry name" value="YheA/YmcA-like_dom_sf"/>
</dbReference>
<dbReference type="NCBIfam" id="NF010209">
    <property type="entry name" value="PRK13676.1-1"/>
    <property type="match status" value="1"/>
</dbReference>
<dbReference type="Pfam" id="PF06133">
    <property type="entry name" value="Com_YlbF"/>
    <property type="match status" value="1"/>
</dbReference>
<dbReference type="SUPFAM" id="SSF158622">
    <property type="entry name" value="YheA/YmcA-like"/>
    <property type="match status" value="1"/>
</dbReference>
<sequence length="113" mass="12929">MSQEIYDYANQLERAVRALPEYQKVLEVKEAIQADASTSQLFDEFVAMQEKIQGMMQSGQMPTAEEQTSIQELSQKIEANDQLKAYFEAQQALSVYMSDIERIVFAPLKDLVK</sequence>
<reference key="1">
    <citation type="journal article" date="2003" name="Genome Res.">
        <title>Genome sequence of an M3 strain of Streptococcus pyogenes reveals a large-scale genomic rearrangement in invasive strains and new insights into phage evolution.</title>
        <authorList>
            <person name="Nakagawa I."/>
            <person name="Kurokawa K."/>
            <person name="Yamashita A."/>
            <person name="Nakata M."/>
            <person name="Tomiyasu Y."/>
            <person name="Okahashi N."/>
            <person name="Kawabata S."/>
            <person name="Yamazaki K."/>
            <person name="Shiba T."/>
            <person name="Yasunaga T."/>
            <person name="Hayashi H."/>
            <person name="Hattori M."/>
            <person name="Hamada S."/>
        </authorList>
    </citation>
    <scope>NUCLEOTIDE SEQUENCE [LARGE SCALE GENOMIC DNA]</scope>
    <source>
        <strain>SSI-1</strain>
    </source>
</reference>
<proteinExistence type="inferred from homology"/>
<organism>
    <name type="scientific">Streptococcus pyogenes serotype M3 (strain SSI-1)</name>
    <dbReference type="NCBI Taxonomy" id="193567"/>
    <lineage>
        <taxon>Bacteria</taxon>
        <taxon>Bacillati</taxon>
        <taxon>Bacillota</taxon>
        <taxon>Bacilli</taxon>
        <taxon>Lactobacillales</taxon>
        <taxon>Streptococcaceae</taxon>
        <taxon>Streptococcus</taxon>
    </lineage>
</organism>
<comment type="similarity">
    <text evidence="1">Belongs to the UPF0342 family.</text>
</comment>
<evidence type="ECO:0000255" key="1">
    <source>
        <dbReference type="HAMAP-Rule" id="MF_01526"/>
    </source>
</evidence>